<dbReference type="EMBL" id="CP000825">
    <property type="protein sequence ID" value="ABV51427.1"/>
    <property type="molecule type" value="Genomic_DNA"/>
</dbReference>
<dbReference type="RefSeq" id="WP_002807401.1">
    <property type="nucleotide sequence ID" value="NC_009840.1"/>
</dbReference>
<dbReference type="SMR" id="A8G746"/>
<dbReference type="STRING" id="93060.P9215_18141"/>
<dbReference type="KEGG" id="pmh:P9215_18141"/>
<dbReference type="eggNOG" id="COG0256">
    <property type="taxonomic scope" value="Bacteria"/>
</dbReference>
<dbReference type="HOGENOM" id="CLU_098841_0_1_3"/>
<dbReference type="OrthoDB" id="9810939at2"/>
<dbReference type="Proteomes" id="UP000002014">
    <property type="component" value="Chromosome"/>
</dbReference>
<dbReference type="GO" id="GO:0022625">
    <property type="term" value="C:cytosolic large ribosomal subunit"/>
    <property type="evidence" value="ECO:0007669"/>
    <property type="project" value="TreeGrafter"/>
</dbReference>
<dbReference type="GO" id="GO:0008097">
    <property type="term" value="F:5S rRNA binding"/>
    <property type="evidence" value="ECO:0007669"/>
    <property type="project" value="TreeGrafter"/>
</dbReference>
<dbReference type="GO" id="GO:0003735">
    <property type="term" value="F:structural constituent of ribosome"/>
    <property type="evidence" value="ECO:0007669"/>
    <property type="project" value="InterPro"/>
</dbReference>
<dbReference type="GO" id="GO:0006412">
    <property type="term" value="P:translation"/>
    <property type="evidence" value="ECO:0007669"/>
    <property type="project" value="UniProtKB-UniRule"/>
</dbReference>
<dbReference type="CDD" id="cd00432">
    <property type="entry name" value="Ribosomal_L18_L5e"/>
    <property type="match status" value="1"/>
</dbReference>
<dbReference type="FunFam" id="3.30.420.100:FF:000001">
    <property type="entry name" value="50S ribosomal protein L18"/>
    <property type="match status" value="1"/>
</dbReference>
<dbReference type="Gene3D" id="3.30.420.100">
    <property type="match status" value="1"/>
</dbReference>
<dbReference type="HAMAP" id="MF_01337_B">
    <property type="entry name" value="Ribosomal_uL18_B"/>
    <property type="match status" value="1"/>
</dbReference>
<dbReference type="InterPro" id="IPR004389">
    <property type="entry name" value="Ribosomal_uL18_bac-type"/>
</dbReference>
<dbReference type="InterPro" id="IPR005484">
    <property type="entry name" value="Ribosomal_uL18_bac/euk"/>
</dbReference>
<dbReference type="NCBIfam" id="TIGR00060">
    <property type="entry name" value="L18_bact"/>
    <property type="match status" value="1"/>
</dbReference>
<dbReference type="PANTHER" id="PTHR12899">
    <property type="entry name" value="39S RIBOSOMAL PROTEIN L18, MITOCHONDRIAL"/>
    <property type="match status" value="1"/>
</dbReference>
<dbReference type="PANTHER" id="PTHR12899:SF3">
    <property type="entry name" value="LARGE RIBOSOMAL SUBUNIT PROTEIN UL18M"/>
    <property type="match status" value="1"/>
</dbReference>
<dbReference type="Pfam" id="PF00861">
    <property type="entry name" value="Ribosomal_L18p"/>
    <property type="match status" value="1"/>
</dbReference>
<dbReference type="SUPFAM" id="SSF53137">
    <property type="entry name" value="Translational machinery components"/>
    <property type="match status" value="1"/>
</dbReference>
<reference key="1">
    <citation type="journal article" date="2007" name="PLoS Genet.">
        <title>Patterns and implications of gene gain and loss in the evolution of Prochlorococcus.</title>
        <authorList>
            <person name="Kettler G.C."/>
            <person name="Martiny A.C."/>
            <person name="Huang K."/>
            <person name="Zucker J."/>
            <person name="Coleman M.L."/>
            <person name="Rodrigue S."/>
            <person name="Chen F."/>
            <person name="Lapidus A."/>
            <person name="Ferriera S."/>
            <person name="Johnson J."/>
            <person name="Steglich C."/>
            <person name="Church G.M."/>
            <person name="Richardson P."/>
            <person name="Chisholm S.W."/>
        </authorList>
    </citation>
    <scope>NUCLEOTIDE SEQUENCE [LARGE SCALE GENOMIC DNA]</scope>
    <source>
        <strain>MIT 9215</strain>
    </source>
</reference>
<feature type="chain" id="PRO_1000067643" description="Large ribosomal subunit protein uL18">
    <location>
        <begin position="1"/>
        <end position="122"/>
    </location>
</feature>
<protein>
    <recommendedName>
        <fullName evidence="1">Large ribosomal subunit protein uL18</fullName>
    </recommendedName>
    <alternativeName>
        <fullName evidence="2">50S ribosomal protein L18</fullName>
    </alternativeName>
</protein>
<proteinExistence type="inferred from homology"/>
<keyword id="KW-0687">Ribonucleoprotein</keyword>
<keyword id="KW-0689">Ribosomal protein</keyword>
<keyword id="KW-0694">RNA-binding</keyword>
<keyword id="KW-0699">rRNA-binding</keyword>
<organism>
    <name type="scientific">Prochlorococcus marinus (strain MIT 9215)</name>
    <dbReference type="NCBI Taxonomy" id="93060"/>
    <lineage>
        <taxon>Bacteria</taxon>
        <taxon>Bacillati</taxon>
        <taxon>Cyanobacteriota</taxon>
        <taxon>Cyanophyceae</taxon>
        <taxon>Synechococcales</taxon>
        <taxon>Prochlorococcaceae</taxon>
        <taxon>Prochlorococcus</taxon>
    </lineage>
</organism>
<name>RL18_PROM2</name>
<accession>A8G746</accession>
<comment type="function">
    <text evidence="1">This is one of the proteins that bind and probably mediate the attachment of the 5S RNA into the large ribosomal subunit, where it forms part of the central protuberance.</text>
</comment>
<comment type="subunit">
    <text evidence="1">Part of the 50S ribosomal subunit; part of the 5S rRNA/L5/L18/L25 subcomplex. Contacts the 5S and 23S rRNAs.</text>
</comment>
<comment type="similarity">
    <text evidence="1">Belongs to the universal ribosomal protein uL18 family.</text>
</comment>
<gene>
    <name evidence="1" type="primary">rplR</name>
    <name evidence="1" type="synonym">rpl18</name>
    <name type="ordered locus">P9215_18141</name>
</gene>
<sequence>MTKLSRKLQTQKRHRRLRRFLIGDATRPRLSVFRSNNHIYAQVIDDSAQTTICSASTVDKELREKSEKLPSDCNSSSIVGKLLAKRAIKKGVKQVIFDRGGNIYHGRVKALADAAREAGLEF</sequence>
<evidence type="ECO:0000255" key="1">
    <source>
        <dbReference type="HAMAP-Rule" id="MF_01337"/>
    </source>
</evidence>
<evidence type="ECO:0000305" key="2"/>